<feature type="chain" id="PRO_0000079970" description="Double C2-like domain-containing protein beta">
    <location>
        <begin position="1"/>
        <end position="412"/>
    </location>
</feature>
<feature type="domain" description="C2 1" evidence="2">
    <location>
        <begin position="126"/>
        <end position="250"/>
    </location>
</feature>
<feature type="domain" description="C2 2" evidence="2">
    <location>
        <begin position="266"/>
        <end position="399"/>
    </location>
</feature>
<feature type="region of interest" description="Mediates interaction with DYNLT1" evidence="1">
    <location>
        <begin position="1"/>
        <end position="90"/>
    </location>
</feature>
<feature type="region of interest" description="Negatively regulates targeting to plasma membrane" evidence="1">
    <location>
        <begin position="1"/>
        <end position="36"/>
    </location>
</feature>
<feature type="region of interest" description="Disordered" evidence="3">
    <location>
        <begin position="38"/>
        <end position="123"/>
    </location>
</feature>
<feature type="region of interest" description="Mediates interaction with STXBP3" evidence="1">
    <location>
        <begin position="257"/>
        <end position="375"/>
    </location>
</feature>
<feature type="compositionally biased region" description="Low complexity" evidence="3">
    <location>
        <begin position="49"/>
        <end position="73"/>
    </location>
</feature>
<feature type="compositionally biased region" description="Pro residues" evidence="3">
    <location>
        <begin position="95"/>
        <end position="108"/>
    </location>
</feature>
<feature type="compositionally biased region" description="Acidic residues" evidence="3">
    <location>
        <begin position="112"/>
        <end position="123"/>
    </location>
</feature>
<feature type="binding site" evidence="2">
    <location>
        <position position="157"/>
    </location>
    <ligand>
        <name>Ca(2+)</name>
        <dbReference type="ChEBI" id="CHEBI:29108"/>
        <label>1</label>
    </ligand>
</feature>
<feature type="binding site" evidence="2">
    <location>
        <position position="163"/>
    </location>
    <ligand>
        <name>Ca(2+)</name>
        <dbReference type="ChEBI" id="CHEBI:29108"/>
        <label>1</label>
    </ligand>
</feature>
<feature type="binding site" evidence="2">
    <location>
        <position position="218"/>
    </location>
    <ligand>
        <name>Ca(2+)</name>
        <dbReference type="ChEBI" id="CHEBI:29108"/>
        <label>1</label>
    </ligand>
</feature>
<feature type="binding site" evidence="2">
    <location>
        <position position="220"/>
    </location>
    <ligand>
        <name>Ca(2+)</name>
        <dbReference type="ChEBI" id="CHEBI:29108"/>
        <label>1</label>
    </ligand>
</feature>
<feature type="binding site" evidence="2">
    <location>
        <position position="297"/>
    </location>
    <ligand>
        <name>Ca(2+)</name>
        <dbReference type="ChEBI" id="CHEBI:29108"/>
        <label>2</label>
    </ligand>
</feature>
<feature type="binding site" evidence="2">
    <location>
        <position position="297"/>
    </location>
    <ligand>
        <name>Ca(2+)</name>
        <dbReference type="ChEBI" id="CHEBI:29108"/>
        <label>3</label>
    </ligand>
</feature>
<feature type="binding site" evidence="2">
    <location>
        <position position="303"/>
    </location>
    <ligand>
        <name>Ca(2+)</name>
        <dbReference type="ChEBI" id="CHEBI:29108"/>
        <label>2</label>
    </ligand>
</feature>
<feature type="binding site" evidence="2">
    <location>
        <position position="357"/>
    </location>
    <ligand>
        <name>Ca(2+)</name>
        <dbReference type="ChEBI" id="CHEBI:29108"/>
        <label>2</label>
    </ligand>
</feature>
<feature type="binding site" evidence="2">
    <location>
        <position position="357"/>
    </location>
    <ligand>
        <name>Ca(2+)</name>
        <dbReference type="ChEBI" id="CHEBI:29108"/>
        <label>3</label>
    </ligand>
</feature>
<feature type="binding site" evidence="2">
    <location>
        <position position="359"/>
    </location>
    <ligand>
        <name>Ca(2+)</name>
        <dbReference type="ChEBI" id="CHEBI:29108"/>
        <label>2</label>
    </ligand>
</feature>
<feature type="binding site" evidence="2">
    <location>
        <position position="359"/>
    </location>
    <ligand>
        <name>Ca(2+)</name>
        <dbReference type="ChEBI" id="CHEBI:29108"/>
        <label>3</label>
    </ligand>
</feature>
<feature type="binding site" evidence="2">
    <location>
        <position position="365"/>
    </location>
    <ligand>
        <name>Ca(2+)</name>
        <dbReference type="ChEBI" id="CHEBI:29108"/>
        <label>3</label>
    </ligand>
</feature>
<feature type="modified residue" description="Phosphoserine" evidence="9">
    <location>
        <position position="411"/>
    </location>
</feature>
<feature type="mutagenesis site" description="Prevents diacylglycerol-induced localization to the plasma membrane. Probably prevents interaction with UNC13A." evidence="4">
    <original>QEHMAI</original>
    <variation>YKDWAF</variation>
    <location>
        <begin position="15"/>
        <end position="20"/>
    </location>
</feature>
<feature type="mutagenesis site" description="Loss of calcium-dependent binding to liposomes and altered fusion-promoting activity; when associated with A-222 and A-360." evidence="6">
    <original>H</original>
    <variation>A</variation>
    <location>
        <position position="158"/>
    </location>
</feature>
<feature type="mutagenesis site" description="Binds liposomes in a calcium-independent manner; when associated with N-220." evidence="5">
    <original>D</original>
    <variation>N</variation>
    <location>
        <position position="218"/>
    </location>
</feature>
<feature type="mutagenesis site" description="Binds liposomes in a calcium-independent manner; when associated with N-218." evidence="5">
    <original>D</original>
    <variation>N</variation>
    <location>
        <position position="220"/>
    </location>
</feature>
<feature type="mutagenesis site" description="Loss of calcium-dependent binding to liposomes and altered fusion-promoting activity; when associated with A-158 and A-360." evidence="6">
    <original>F</original>
    <variation>A</variation>
    <location>
        <position position="222"/>
    </location>
</feature>
<feature type="mutagenesis site" description="Loss of calcium-independent binding to liposomes. Loss of interaction with the SNARE complex and altered fusion-promoting activity; when associated with E-319." evidence="6">
    <original>K</original>
    <variation>E</variation>
    <location>
        <position position="237"/>
    </location>
</feature>
<feature type="mutagenesis site" description="Loss of calcium-independent binding to liposomes. Loss of interaction with the SNARE complex and altered fusion-promoting activity; when associated with E-237." evidence="6">
    <original>K</original>
    <variation>E</variation>
    <location>
        <position position="319"/>
    </location>
</feature>
<feature type="mutagenesis site" description="Loss of calcium-dependent binding to liposomes and altered fusion-promoting activity; when associated with A-158 and A-222." evidence="6">
    <original>I</original>
    <variation>A</variation>
    <location>
        <position position="360"/>
    </location>
</feature>
<feature type="strand" evidence="10">
    <location>
        <begin position="129"/>
        <end position="137"/>
    </location>
</feature>
<feature type="helix" evidence="10">
    <location>
        <begin position="138"/>
        <end position="140"/>
    </location>
</feature>
<feature type="strand" evidence="10">
    <location>
        <begin position="142"/>
        <end position="152"/>
    </location>
</feature>
<feature type="strand" evidence="10">
    <location>
        <begin position="164"/>
        <end position="172"/>
    </location>
</feature>
<feature type="helix" evidence="10">
    <location>
        <begin position="176"/>
        <end position="178"/>
    </location>
</feature>
<feature type="strand" evidence="10">
    <location>
        <begin position="179"/>
        <end position="181"/>
    </location>
</feature>
<feature type="strand" evidence="10">
    <location>
        <begin position="192"/>
        <end position="199"/>
    </location>
</feature>
<feature type="helix" evidence="10">
    <location>
        <begin position="204"/>
        <end position="209"/>
    </location>
</feature>
<feature type="strand" evidence="10">
    <location>
        <begin position="211"/>
        <end position="218"/>
    </location>
</feature>
<feature type="strand" evidence="10">
    <location>
        <begin position="226"/>
        <end position="234"/>
    </location>
</feature>
<feature type="helix" evidence="10">
    <location>
        <begin position="235"/>
        <end position="237"/>
    </location>
</feature>
<feature type="strand" evidence="10">
    <location>
        <begin position="244"/>
        <end position="249"/>
    </location>
</feature>
<feature type="strand" evidence="11">
    <location>
        <begin position="266"/>
        <end position="277"/>
    </location>
</feature>
<feature type="turn" evidence="11">
    <location>
        <begin position="278"/>
        <end position="281"/>
    </location>
</feature>
<feature type="strand" evidence="11">
    <location>
        <begin position="282"/>
        <end position="292"/>
    </location>
</feature>
<feature type="strand" evidence="11">
    <location>
        <begin position="304"/>
        <end position="312"/>
    </location>
</feature>
<feature type="strand" evidence="11">
    <location>
        <begin position="332"/>
        <end position="340"/>
    </location>
</feature>
<feature type="helix" evidence="11">
    <location>
        <begin position="343"/>
        <end position="348"/>
    </location>
</feature>
<feature type="strand" evidence="11">
    <location>
        <begin position="350"/>
        <end position="357"/>
    </location>
</feature>
<feature type="strand" evidence="11">
    <location>
        <begin position="360"/>
        <end position="362"/>
    </location>
</feature>
<feature type="strand" evidence="11">
    <location>
        <begin position="365"/>
        <end position="373"/>
    </location>
</feature>
<feature type="helix" evidence="11">
    <location>
        <begin position="378"/>
        <end position="389"/>
    </location>
</feature>
<feature type="strand" evidence="11">
    <location>
        <begin position="395"/>
        <end position="403"/>
    </location>
</feature>
<name>DOC2B_RAT</name>
<dbReference type="EMBL" id="U70778">
    <property type="protein sequence ID" value="AAB47747.2"/>
    <property type="molecule type" value="mRNA"/>
</dbReference>
<dbReference type="RefSeq" id="NP_112404.1">
    <property type="nucleotide sequence ID" value="NM_031142.1"/>
</dbReference>
<dbReference type="PDB" id="4LCV">
    <property type="method" value="X-ray"/>
    <property type="resolution" value="2.00 A"/>
    <property type="chains" value="A/B/C/D=125-255"/>
</dbReference>
<dbReference type="PDB" id="4LDC">
    <property type="method" value="X-ray"/>
    <property type="resolution" value="1.26 A"/>
    <property type="chains" value="A=265-412"/>
</dbReference>
<dbReference type="PDBsum" id="4LCV"/>
<dbReference type="PDBsum" id="4LDC"/>
<dbReference type="SMR" id="P70610"/>
<dbReference type="FunCoup" id="P70610">
    <property type="interactions" value="699"/>
</dbReference>
<dbReference type="STRING" id="10116.ENSRNOP00000074543"/>
<dbReference type="iPTMnet" id="P70610"/>
<dbReference type="PhosphoSitePlus" id="P70610"/>
<dbReference type="PaxDb" id="10116-ENSRNOP00000008429"/>
<dbReference type="ABCD" id="P70610">
    <property type="antibodies" value="1 sequenced antibody"/>
</dbReference>
<dbReference type="GeneID" id="81820"/>
<dbReference type="KEGG" id="rno:81820"/>
<dbReference type="AGR" id="RGD:620519"/>
<dbReference type="CTD" id="8447"/>
<dbReference type="RGD" id="620519">
    <property type="gene designation" value="Doc2b"/>
</dbReference>
<dbReference type="eggNOG" id="KOG1013">
    <property type="taxonomic scope" value="Eukaryota"/>
</dbReference>
<dbReference type="InParanoid" id="P70610"/>
<dbReference type="OrthoDB" id="18156at9989"/>
<dbReference type="PhylomeDB" id="P70610"/>
<dbReference type="EvolutionaryTrace" id="P70610"/>
<dbReference type="PRO" id="PR:P70610"/>
<dbReference type="Proteomes" id="UP000002494">
    <property type="component" value="Unplaced"/>
</dbReference>
<dbReference type="GO" id="GO:0005737">
    <property type="term" value="C:cytoplasm"/>
    <property type="evidence" value="ECO:0000250"/>
    <property type="project" value="UniProtKB"/>
</dbReference>
<dbReference type="GO" id="GO:0098850">
    <property type="term" value="C:extrinsic component of synaptic vesicle membrane"/>
    <property type="evidence" value="ECO:0000314"/>
    <property type="project" value="SynGO"/>
</dbReference>
<dbReference type="GO" id="GO:0098978">
    <property type="term" value="C:glutamatergic synapse"/>
    <property type="evidence" value="ECO:0000314"/>
    <property type="project" value="SynGO"/>
</dbReference>
<dbReference type="GO" id="GO:0005886">
    <property type="term" value="C:plasma membrane"/>
    <property type="evidence" value="ECO:0000314"/>
    <property type="project" value="UniProtKB"/>
</dbReference>
<dbReference type="GO" id="GO:0045202">
    <property type="term" value="C:synapse"/>
    <property type="evidence" value="ECO:0000318"/>
    <property type="project" value="GO_Central"/>
</dbReference>
<dbReference type="GO" id="GO:0005509">
    <property type="term" value="F:calcium ion binding"/>
    <property type="evidence" value="ECO:0000266"/>
    <property type="project" value="RGD"/>
</dbReference>
<dbReference type="GO" id="GO:0005544">
    <property type="term" value="F:calcium-dependent phospholipid binding"/>
    <property type="evidence" value="ECO:0000314"/>
    <property type="project" value="UniProtKB"/>
</dbReference>
<dbReference type="GO" id="GO:0019905">
    <property type="term" value="F:syntaxin binding"/>
    <property type="evidence" value="ECO:0000266"/>
    <property type="project" value="RGD"/>
</dbReference>
<dbReference type="GO" id="GO:0048791">
    <property type="term" value="P:calcium ion-regulated exocytosis of neurotransmitter"/>
    <property type="evidence" value="ECO:0000314"/>
    <property type="project" value="UniProtKB"/>
</dbReference>
<dbReference type="GO" id="GO:0099502">
    <property type="term" value="P:calcium-dependent activation of synaptic vesicle fusion"/>
    <property type="evidence" value="ECO:0000314"/>
    <property type="project" value="SynGO"/>
</dbReference>
<dbReference type="GO" id="GO:0006887">
    <property type="term" value="P:exocytosis"/>
    <property type="evidence" value="ECO:0000270"/>
    <property type="project" value="RGD"/>
</dbReference>
<dbReference type="GO" id="GO:0045956">
    <property type="term" value="P:positive regulation of calcium ion-dependent exocytosis"/>
    <property type="evidence" value="ECO:0000314"/>
    <property type="project" value="UniProtKB"/>
</dbReference>
<dbReference type="GO" id="GO:0032024">
    <property type="term" value="P:positive regulation of insulin secretion"/>
    <property type="evidence" value="ECO:0000250"/>
    <property type="project" value="UniProtKB"/>
</dbReference>
<dbReference type="GO" id="GO:0031340">
    <property type="term" value="P:positive regulation of vesicle fusion"/>
    <property type="evidence" value="ECO:0000314"/>
    <property type="project" value="UniProtKB"/>
</dbReference>
<dbReference type="GO" id="GO:0008104">
    <property type="term" value="P:protein localization"/>
    <property type="evidence" value="ECO:0000250"/>
    <property type="project" value="UniProtKB"/>
</dbReference>
<dbReference type="GO" id="GO:0061669">
    <property type="term" value="P:spontaneous neurotransmitter secretion"/>
    <property type="evidence" value="ECO:0000266"/>
    <property type="project" value="RGD"/>
</dbReference>
<dbReference type="CDD" id="cd04035">
    <property type="entry name" value="C2A_Rabphilin_Doc2"/>
    <property type="match status" value="1"/>
</dbReference>
<dbReference type="CDD" id="cd08384">
    <property type="entry name" value="C2B_Rabphilin_Doc2"/>
    <property type="match status" value="1"/>
</dbReference>
<dbReference type="FunFam" id="2.60.40.150:FF:000032">
    <property type="entry name" value="Double c2-like domain-containing"/>
    <property type="match status" value="1"/>
</dbReference>
<dbReference type="FunFam" id="2.60.40.150:FF:000023">
    <property type="entry name" value="Double C2-like domain-containing protein"/>
    <property type="match status" value="1"/>
</dbReference>
<dbReference type="Gene3D" id="2.60.40.150">
    <property type="entry name" value="C2 domain"/>
    <property type="match status" value="2"/>
</dbReference>
<dbReference type="InterPro" id="IPR000008">
    <property type="entry name" value="C2_dom"/>
</dbReference>
<dbReference type="InterPro" id="IPR035892">
    <property type="entry name" value="C2_domain_sf"/>
</dbReference>
<dbReference type="InterPro" id="IPR014638">
    <property type="entry name" value="Doc2"/>
</dbReference>
<dbReference type="InterPro" id="IPR043566">
    <property type="entry name" value="Rabphilin/DOC2/Noc2"/>
</dbReference>
<dbReference type="InterPro" id="IPR047022">
    <property type="entry name" value="Rabphilin_Doc2_C2A"/>
</dbReference>
<dbReference type="InterPro" id="IPR001565">
    <property type="entry name" value="Synaptotagmin"/>
</dbReference>
<dbReference type="PANTHER" id="PTHR45729:SF9">
    <property type="entry name" value="DOUBLE C2-LIKE DOMAIN-CONTAINING PROTEIN BETA"/>
    <property type="match status" value="1"/>
</dbReference>
<dbReference type="PANTHER" id="PTHR45729">
    <property type="entry name" value="RABPHILIN, ISOFORM A"/>
    <property type="match status" value="1"/>
</dbReference>
<dbReference type="Pfam" id="PF00168">
    <property type="entry name" value="C2"/>
    <property type="match status" value="2"/>
</dbReference>
<dbReference type="PIRSF" id="PIRSF036931">
    <property type="entry name" value="Doc2"/>
    <property type="match status" value="1"/>
</dbReference>
<dbReference type="PRINTS" id="PR00360">
    <property type="entry name" value="C2DOMAIN"/>
</dbReference>
<dbReference type="PRINTS" id="PR00399">
    <property type="entry name" value="SYNAPTOTAGMN"/>
</dbReference>
<dbReference type="SMART" id="SM00239">
    <property type="entry name" value="C2"/>
    <property type="match status" value="2"/>
</dbReference>
<dbReference type="SUPFAM" id="SSF49562">
    <property type="entry name" value="C2 domain (Calcium/lipid-binding domain, CaLB)"/>
    <property type="match status" value="2"/>
</dbReference>
<dbReference type="PROSITE" id="PS50004">
    <property type="entry name" value="C2"/>
    <property type="match status" value="2"/>
</dbReference>
<evidence type="ECO:0000250" key="1"/>
<evidence type="ECO:0000255" key="2">
    <source>
        <dbReference type="PROSITE-ProRule" id="PRU00041"/>
    </source>
</evidence>
<evidence type="ECO:0000256" key="3">
    <source>
        <dbReference type="SAM" id="MobiDB-lite"/>
    </source>
</evidence>
<evidence type="ECO:0000269" key="4">
    <source>
    </source>
</evidence>
<evidence type="ECO:0000269" key="5">
    <source>
    </source>
</evidence>
<evidence type="ECO:0000269" key="6">
    <source>
    </source>
</evidence>
<evidence type="ECO:0000269" key="7">
    <source>
    </source>
</evidence>
<evidence type="ECO:0000269" key="8">
    <source>
    </source>
</evidence>
<evidence type="ECO:0007744" key="9">
    <source>
    </source>
</evidence>
<evidence type="ECO:0007829" key="10">
    <source>
        <dbReference type="PDB" id="4LCV"/>
    </source>
</evidence>
<evidence type="ECO:0007829" key="11">
    <source>
        <dbReference type="PDB" id="4LDC"/>
    </source>
</evidence>
<reference key="1">
    <citation type="journal article" date="1997" name="Neuron">
        <title>DOC2 proteins in rat brain: complementary distribution and proposed function as vesicular adapter proteins in early stages of secretion.</title>
        <authorList>
            <person name="Verhage M."/>
            <person name="de Vries K.J."/>
            <person name="Roeshol H."/>
            <person name="Burbach J.P."/>
            <person name="Gispen W.H."/>
            <person name="Suedhof T.C."/>
        </authorList>
    </citation>
    <scope>NUCLEOTIDE SEQUENCE [MRNA]</scope>
    <scope>SUBCELLULAR LOCATION</scope>
    <scope>TISSUE SPECIFICITY</scope>
    <source>
        <tissue>Brain</tissue>
    </source>
</reference>
<reference key="2">
    <citation type="journal article" date="1998" name="J. Biol. Chem.">
        <title>Interaction of Doc2 with tctex-1, a light chain of cytoplasmic dynein. Implication in dynein-dependent vesicle transport.</title>
        <authorList>
            <person name="Nagano F."/>
            <person name="Orita S."/>
            <person name="Sasaki T."/>
            <person name="Naito A."/>
            <person name="Sakaguchi G."/>
            <person name="Maeda M."/>
            <person name="Watanabe T."/>
            <person name="Kominami E."/>
            <person name="Uchiyama Y."/>
            <person name="Takai Y."/>
        </authorList>
    </citation>
    <scope>INTERACTION WITH DYNLT1</scope>
    <source>
        <strain>Sprague-Dawley</strain>
        <tissue>Brain</tissue>
    </source>
</reference>
<reference key="3">
    <citation type="journal article" date="2004" name="J. Biol. Chem.">
        <title>Ca(2+)-induced recruitment of the secretory vesicle protein DOC2B to the target membrane.</title>
        <authorList>
            <person name="Groffen A.J."/>
            <person name="Brian E.C."/>
            <person name="Dudok J.J."/>
            <person name="Kampmeijer J."/>
            <person name="Toonen R.F."/>
            <person name="Verhage M."/>
        </authorList>
    </citation>
    <scope>INTERACTION WITH UNC13A</scope>
    <scope>SUBCELLULAR LOCATION</scope>
    <scope>MUTAGENESIS OF 15-GLN--ILE-20</scope>
</reference>
<reference key="4">
    <citation type="journal article" date="2008" name="J. Neurosci.">
        <title>DOC2B acts as a calcium switch and enhances vesicle fusion.</title>
        <authorList>
            <person name="Friedrich R."/>
            <person name="Groffen A.J."/>
            <person name="Connell E."/>
            <person name="van Weering J.R."/>
            <person name="Gutman O."/>
            <person name="Henis Y.I."/>
            <person name="Davletov B."/>
            <person name="Ashery U."/>
        </authorList>
    </citation>
    <scope>FUNCTION</scope>
    <scope>PHOSPHOLIPID-BINDING</scope>
    <scope>MUTAGENESIS OF ASP-218 AND ASP-220</scope>
    <scope>INTERACTION WITH STX1A AND SNAP25</scope>
</reference>
<reference key="5">
    <citation type="journal article" date="2010" name="Science">
        <title>Doc2b is a high-affinity Ca2+ sensor for spontaneous neurotransmitter release.</title>
        <authorList>
            <person name="Groffen A.J."/>
            <person name="Martens S."/>
            <person name="Diez Arazola R."/>
            <person name="Cornelisse L.N."/>
            <person name="Lozovaya N."/>
            <person name="de Jong A.P."/>
            <person name="Goriounova N.A."/>
            <person name="Habets R.L."/>
            <person name="Takai Y."/>
            <person name="Borst J.G."/>
            <person name="Brose N."/>
            <person name="McMahon H.T."/>
            <person name="Verhage M."/>
        </authorList>
    </citation>
    <scope>FUNCTION</scope>
    <scope>PHOSPHOLIPID-BINDING</scope>
    <scope>INTERACTION WITH SNARE COMPLEX</scope>
    <scope>MUTAGENESIS OF HIS-158; PHE-222; LYS-237; LYS-319 AND ILE-360</scope>
</reference>
<reference key="6">
    <citation type="journal article" date="2012" name="Nat. Commun.">
        <title>Quantitative maps of protein phosphorylation sites across 14 different rat organs and tissues.</title>
        <authorList>
            <person name="Lundby A."/>
            <person name="Secher A."/>
            <person name="Lage K."/>
            <person name="Nordsborg N.B."/>
            <person name="Dmytriyev A."/>
            <person name="Lundby C."/>
            <person name="Olsen J.V."/>
        </authorList>
    </citation>
    <scope>PHOSPHORYLATION [LARGE SCALE ANALYSIS] AT SER-411</scope>
    <scope>IDENTIFICATION BY MASS SPECTROMETRY [LARGE SCALE ANALYSIS]</scope>
</reference>
<accession>P70610</accession>
<proteinExistence type="evidence at protein level"/>
<organism>
    <name type="scientific">Rattus norvegicus</name>
    <name type="common">Rat</name>
    <dbReference type="NCBI Taxonomy" id="10116"/>
    <lineage>
        <taxon>Eukaryota</taxon>
        <taxon>Metazoa</taxon>
        <taxon>Chordata</taxon>
        <taxon>Craniata</taxon>
        <taxon>Vertebrata</taxon>
        <taxon>Euteleostomi</taxon>
        <taxon>Mammalia</taxon>
        <taxon>Eutheria</taxon>
        <taxon>Euarchontoglires</taxon>
        <taxon>Glires</taxon>
        <taxon>Rodentia</taxon>
        <taxon>Myomorpha</taxon>
        <taxon>Muroidea</taxon>
        <taxon>Muridae</taxon>
        <taxon>Murinae</taxon>
        <taxon>Rattus</taxon>
    </lineage>
</organism>
<gene>
    <name type="primary">Doc2b</name>
</gene>
<sequence length="412" mass="45841">MTLRRRGEKATISIQEHMAIDVCPGPIRPIKQISDYFPRFPRGLPPTAAPRASAPPDAPARSPAATAGPRSPSDGARDDDEDVDQLFGAYGASPGPSPGPSPVRPPAKPPEDEPDADGYESDDCTALGTLDFSLLYDQENNALHCTISKAKGLKPMDHNGLADPYVKLHLLPGASKANKLRTKTLRNTLNPSWNETLTYYGITDEDMIRKTLRISVCDEDKFRHNEFIGETRVPLKKLKPNHTKTFSICLEKQLPVDKAEDKSLEERGRILISLKYSSQKQGLLVGIVRCAHLAAMDANGYSDPYVKTYLKPDVDKKSKHKTAVKKKTLNPEFNEEFCYEIKHGDLAKKTLEVTVWDYDIGKSNDFIGGVVLGINAKGERLKHWFDCLKNKDKRIERWHTLTNEIPGAVLSD</sequence>
<keyword id="KW-0002">3D-structure</keyword>
<keyword id="KW-0106">Calcium</keyword>
<keyword id="KW-0111">Calcium/phospholipid-binding</keyword>
<keyword id="KW-1003">Cell membrane</keyword>
<keyword id="KW-0963">Cytoplasm</keyword>
<keyword id="KW-0472">Membrane</keyword>
<keyword id="KW-0479">Metal-binding</keyword>
<keyword id="KW-0597">Phosphoprotein</keyword>
<keyword id="KW-1185">Reference proteome</keyword>
<keyword id="KW-0677">Repeat</keyword>
<comment type="function">
    <text evidence="5 6">Calcium sensor which positively regulates SNARE-dependent fusion of vesicles with membranes. Binds phospholipids in a calcium-dependent manner and may act at the priming stage of fusion by modifying membrane curvature to stimulate fusion. Involved in calcium-triggered exocytosis in chromaffin cells and calcium-dependent spontaneous release of neurotransmitter in absence of action potentials in neuronal cells. Involved both in glucose-stimulated insulin secretion in pancreatic cells and insulin-dependent GLUT4 transport to the plasma membrane in adipocytes.</text>
</comment>
<comment type="cofactor">
    <cofactor evidence="2">
        <name>Ca(2+)</name>
        <dbReference type="ChEBI" id="CHEBI:29108"/>
    </cofactor>
</comment>
<comment type="subunit">
    <text evidence="1 4 5 6 8">Interacts with STX4; the interaction is calcium-dependent, increased by insulin and glucose, and mediates vesicle fusion with plasma membrane in pancreatic cells and adipocytes. Interacts with STXBP3; the interaction is direct, occurs at the cell membrane and regulates glucose-stimulated insulin secretion (By similarity). Interacts with cytoplasmic dynein light chain DYNLT1. Interacts with the SNARE (soluble N-ethylmaleimide-sensitive factor attached protein receptor) complex composed of SNAP25, STX1A and VAMP2; the interaction is calcium-dependent and competitive with SYT1. May interact with UNC13A; the interaction mediates targeting to the plasma membrane.</text>
</comment>
<comment type="subcellular location">
    <subcellularLocation>
        <location>Cytoplasm</location>
    </subcellularLocation>
    <subcellularLocation>
        <location evidence="1">Cytoplasmic granule</location>
    </subcellularLocation>
    <subcellularLocation>
        <location>Cell membrane</location>
        <topology>Peripheral membrane protein</topology>
    </subcellularLocation>
    <text>Translocates to the plasma membrane in a calcium-dependent manner.</text>
</comment>
<comment type="tissue specificity">
    <text evidence="7">Expressed in brain; highly enriched in neurons.</text>
</comment>
<comment type="domain">
    <text evidence="1">C2 domain 1 is involved in binding calcium and phospholipids. C2 domain 2 may also play a role in the calcium-dependent targeting to membranes (By similarity).</text>
</comment>
<protein>
    <recommendedName>
        <fullName>Double C2-like domain-containing protein beta</fullName>
        <shortName>Doc2-beta</shortName>
    </recommendedName>
</protein>